<name>GRAN_HUMAN</name>
<feature type="chain" id="PRO_0000073721" description="Grancalcin">
    <location>
        <begin position="1"/>
        <end position="217"/>
    </location>
</feature>
<feature type="domain" description="EF-hand 1" evidence="1">
    <location>
        <begin position="48"/>
        <end position="83"/>
    </location>
</feature>
<feature type="domain" description="EF-hand 2" evidence="1">
    <location>
        <begin position="89"/>
        <end position="122"/>
    </location>
</feature>
<feature type="domain" description="EF-hand 3" evidence="1">
    <location>
        <begin position="119"/>
        <end position="154"/>
    </location>
</feature>
<feature type="domain" description="EF-hand 4" evidence="8">
    <location>
        <begin position="155"/>
        <end position="180"/>
    </location>
</feature>
<feature type="binding site" evidence="8">
    <location>
        <position position="65"/>
    </location>
    <ligand>
        <name>Ca(2+)</name>
        <dbReference type="ChEBI" id="CHEBI:29108"/>
        <label>1</label>
    </ligand>
</feature>
<feature type="binding site" evidence="8">
    <location>
        <position position="69"/>
    </location>
    <ligand>
        <name>Ca(2+)</name>
        <dbReference type="ChEBI" id="CHEBI:29108"/>
        <label>1</label>
    </ligand>
</feature>
<feature type="binding site" evidence="8">
    <location>
        <position position="71"/>
    </location>
    <ligand>
        <name>Ca(2+)</name>
        <dbReference type="ChEBI" id="CHEBI:29108"/>
        <label>1</label>
    </ligand>
</feature>
<feature type="binding site" evidence="1">
    <location>
        <position position="132"/>
    </location>
    <ligand>
        <name>Ca(2+)</name>
        <dbReference type="ChEBI" id="CHEBI:29108"/>
        <label>2</label>
    </ligand>
</feature>
<feature type="binding site" evidence="1">
    <location>
        <position position="134"/>
    </location>
    <ligand>
        <name>Ca(2+)</name>
        <dbReference type="ChEBI" id="CHEBI:29108"/>
        <label>2</label>
    </ligand>
</feature>
<feature type="binding site" evidence="1">
    <location>
        <position position="136"/>
    </location>
    <ligand>
        <name>Ca(2+)</name>
        <dbReference type="ChEBI" id="CHEBI:29108"/>
        <label>2</label>
    </ligand>
</feature>
<feature type="binding site" evidence="1">
    <location>
        <position position="138"/>
    </location>
    <ligand>
        <name>Ca(2+)</name>
        <dbReference type="ChEBI" id="CHEBI:29108"/>
        <label>2</label>
    </ligand>
</feature>
<feature type="binding site" evidence="1">
    <location>
        <position position="143"/>
    </location>
    <ligand>
        <name>Ca(2+)</name>
        <dbReference type="ChEBI" id="CHEBI:29108"/>
        <label>2</label>
    </ligand>
</feature>
<feature type="sequence variant" id="VAR_048657" description="In dbSNP:rs17783344." evidence="7">
    <original>S</original>
    <variation>A</variation>
    <location>
        <position position="80"/>
    </location>
</feature>
<feature type="sequence conflict" description="In Ref. 7; AA sequence." evidence="8" ref="7">
    <original>R</original>
    <variation>D</variation>
    <location>
        <position position="166"/>
    </location>
</feature>
<feature type="helix" evidence="12">
    <location>
        <begin position="54"/>
        <end position="62"/>
    </location>
</feature>
<feature type="helix" evidence="12">
    <location>
        <begin position="63"/>
        <end position="65"/>
    </location>
</feature>
<feature type="helix" evidence="12">
    <location>
        <begin position="70"/>
        <end position="80"/>
    </location>
</feature>
<feature type="turn" evidence="12">
    <location>
        <begin position="81"/>
        <end position="85"/>
    </location>
</feature>
<feature type="helix" evidence="12">
    <location>
        <begin position="91"/>
        <end position="101"/>
    </location>
</feature>
<feature type="strand" evidence="10">
    <location>
        <begin position="106"/>
        <end position="109"/>
    </location>
</feature>
<feature type="helix" evidence="12">
    <location>
        <begin position="111"/>
        <end position="131"/>
    </location>
</feature>
<feature type="strand" evidence="11">
    <location>
        <begin position="134"/>
        <end position="136"/>
    </location>
</feature>
<feature type="strand" evidence="11">
    <location>
        <begin position="138"/>
        <end position="140"/>
    </location>
</feature>
<feature type="helix" evidence="12">
    <location>
        <begin position="141"/>
        <end position="150"/>
    </location>
</feature>
<feature type="helix" evidence="12">
    <location>
        <begin position="157"/>
        <end position="167"/>
    </location>
</feature>
<feature type="strand" evidence="10">
    <location>
        <begin position="169"/>
        <end position="171"/>
    </location>
</feature>
<feature type="strand" evidence="11">
    <location>
        <begin position="172"/>
        <end position="174"/>
    </location>
</feature>
<feature type="helix" evidence="12">
    <location>
        <begin position="175"/>
        <end position="193"/>
    </location>
</feature>
<feature type="strand" evidence="12">
    <location>
        <begin position="201"/>
        <end position="206"/>
    </location>
</feature>
<feature type="helix" evidence="12">
    <location>
        <begin position="207"/>
        <end position="215"/>
    </location>
</feature>
<comment type="function">
    <text>Calcium-binding protein that may play a role in the adhesion of neutrophils to fibronectin. May play a role in the formation of focal adhesions.</text>
</comment>
<comment type="subunit">
    <text evidence="2 3 4 5">Homodimer. Interacts with SRI and LCP1.</text>
</comment>
<comment type="interaction">
    <interactant intactId="EBI-947242">
        <id>P28676</id>
    </interactant>
    <interactant intactId="EBI-12318443">
        <id>Q8NFV4-4</id>
        <label>ABHD11</label>
    </interactant>
    <organismsDiffer>false</organismsDiffer>
    <experiments>3</experiments>
</comment>
<comment type="interaction">
    <interactant intactId="EBI-947242">
        <id>P28676</id>
    </interactant>
    <interactant intactId="EBI-930964">
        <id>P54253</id>
        <label>ATXN1</label>
    </interactant>
    <organismsDiffer>false</organismsDiffer>
    <experiments>4</experiments>
</comment>
<comment type="interaction">
    <interactant intactId="EBI-947242">
        <id>P28676</id>
    </interactant>
    <interactant intactId="EBI-953896">
        <id>Q9NP55</id>
        <label>BPIFA1</label>
    </interactant>
    <organismsDiffer>false</organismsDiffer>
    <experiments>3</experiments>
</comment>
<comment type="interaction">
    <interactant intactId="EBI-947242">
        <id>P28676</id>
    </interactant>
    <interactant intactId="EBI-12809220">
        <id>Q5SWW7</id>
        <label>C10orf55</label>
    </interactant>
    <organismsDiffer>false</organismsDiffer>
    <experiments>3</experiments>
</comment>
<comment type="interaction">
    <interactant intactId="EBI-947242">
        <id>P28676</id>
    </interactant>
    <interactant intactId="EBI-739580">
        <id>Q13137</id>
        <label>CALCOCO2</label>
    </interactant>
    <organismsDiffer>false</organismsDiffer>
    <experiments>3</experiments>
</comment>
<comment type="interaction">
    <interactant intactId="EBI-947242">
        <id>P28676</id>
    </interactant>
    <interactant intactId="EBI-13328871">
        <id>Q9H6J7-2</id>
        <label>CSTPP1</label>
    </interactant>
    <organismsDiffer>false</organismsDiffer>
    <experiments>3</experiments>
</comment>
<comment type="interaction">
    <interactant intactId="EBI-947242">
        <id>P28676</id>
    </interactant>
    <interactant intactId="EBI-10194609">
        <id>Q9H4Y5</id>
        <label>GSTO2</label>
    </interactant>
    <organismsDiffer>false</organismsDiffer>
    <experiments>3</experiments>
</comment>
<comment type="interaction">
    <interactant intactId="EBI-947242">
        <id>P28676</id>
    </interactant>
    <interactant intactId="EBI-466029">
        <id>P42858</id>
        <label>HTT</label>
    </interactant>
    <organismsDiffer>false</organismsDiffer>
    <experiments>3</experiments>
</comment>
<comment type="interaction">
    <interactant intactId="EBI-947242">
        <id>P28676</id>
    </interactant>
    <interactant intactId="EBI-10182930">
        <id>P43361</id>
        <label>MAGEA8</label>
    </interactant>
    <organismsDiffer>false</organismsDiffer>
    <experiments>9</experiments>
</comment>
<comment type="interaction">
    <interactant intactId="EBI-947242">
        <id>P28676</id>
    </interactant>
    <interactant intactId="EBI-603350">
        <id>P28070</id>
        <label>PSMB4</label>
    </interactant>
    <organismsDiffer>false</organismsDiffer>
    <experiments>3</experiments>
</comment>
<comment type="interaction">
    <interactant intactId="EBI-947242">
        <id>P28676</id>
    </interactant>
    <interactant intactId="EBI-359224">
        <id>Q13077</id>
        <label>TRAF1</label>
    </interactant>
    <organismsDiffer>false</organismsDiffer>
    <experiments>3</experiments>
</comment>
<comment type="interaction">
    <interactant intactId="EBI-947242">
        <id>P28676</id>
    </interactant>
    <interactant intactId="EBI-355744">
        <id>Q12933</id>
        <label>TRAF2</label>
    </interactant>
    <organismsDiffer>false</organismsDiffer>
    <experiments>3</experiments>
</comment>
<comment type="subcellular location">
    <subcellularLocation>
        <location evidence="5 6">Cytoplasm</location>
    </subcellularLocation>
    <subcellularLocation>
        <location evidence="6 9">Cytoplasmic granule membrane</location>
        <topology>Peripheral membrane protein</topology>
        <orientation>Cytoplasmic side</orientation>
    </subcellularLocation>
    <text evidence="6">Primarily cytosolic in the absence of calcium or magnesium ions. Relocates to granules and other membranes in response to elevated calcium and magnesium levels.</text>
</comment>
<comment type="tissue specificity">
    <text evidence="6">Detected in neutrophils and macrophages (at protein level). Highly expressed in bone marrow.</text>
</comment>
<comment type="miscellaneous">
    <text>This protein has been shown to bind calcium with high affinity.</text>
</comment>
<comment type="sequence caution" evidence="8">
    <conflict type="erroneous initiation">
        <sequence resource="EMBL-CDS" id="BAD93005"/>
    </conflict>
</comment>
<accession>P28676</accession>
<accession>B2R5X3</accession>
<accession>Q53TB5</accession>
<accession>Q59EP3</accession>
<reference key="1">
    <citation type="journal article" date="1992" name="J. Biol. Chem.">
        <title>Molecular cloning and characterization of grancalcin, a novel EF-hand calcium-binding protein abundant in neutrophils and monocytes.</title>
        <authorList>
            <person name="Boyhan A."/>
            <person name="Casimir C.M."/>
            <person name="French J.K."/>
            <person name="Teahan C.G."/>
            <person name="Segal A.W."/>
        </authorList>
    </citation>
    <scope>NUCLEOTIDE SEQUENCE [MRNA]</scope>
    <scope>SUBCELLULAR LOCATION</scope>
    <scope>TISSUE SPECIFICITY</scope>
    <source>
        <tissue>Neutrophil</tissue>
    </source>
</reference>
<reference key="2">
    <citation type="journal article" date="2004" name="Nat. Genet.">
        <title>Complete sequencing and characterization of 21,243 full-length human cDNAs.</title>
        <authorList>
            <person name="Ota T."/>
            <person name="Suzuki Y."/>
            <person name="Nishikawa T."/>
            <person name="Otsuki T."/>
            <person name="Sugiyama T."/>
            <person name="Irie R."/>
            <person name="Wakamatsu A."/>
            <person name="Hayashi K."/>
            <person name="Sato H."/>
            <person name="Nagai K."/>
            <person name="Kimura K."/>
            <person name="Makita H."/>
            <person name="Sekine M."/>
            <person name="Obayashi M."/>
            <person name="Nishi T."/>
            <person name="Shibahara T."/>
            <person name="Tanaka T."/>
            <person name="Ishii S."/>
            <person name="Yamamoto J."/>
            <person name="Saito K."/>
            <person name="Kawai Y."/>
            <person name="Isono Y."/>
            <person name="Nakamura Y."/>
            <person name="Nagahari K."/>
            <person name="Murakami K."/>
            <person name="Yasuda T."/>
            <person name="Iwayanagi T."/>
            <person name="Wagatsuma M."/>
            <person name="Shiratori A."/>
            <person name="Sudo H."/>
            <person name="Hosoiri T."/>
            <person name="Kaku Y."/>
            <person name="Kodaira H."/>
            <person name="Kondo H."/>
            <person name="Sugawara M."/>
            <person name="Takahashi M."/>
            <person name="Kanda K."/>
            <person name="Yokoi T."/>
            <person name="Furuya T."/>
            <person name="Kikkawa E."/>
            <person name="Omura Y."/>
            <person name="Abe K."/>
            <person name="Kamihara K."/>
            <person name="Katsuta N."/>
            <person name="Sato K."/>
            <person name="Tanikawa M."/>
            <person name="Yamazaki M."/>
            <person name="Ninomiya K."/>
            <person name="Ishibashi T."/>
            <person name="Yamashita H."/>
            <person name="Murakawa K."/>
            <person name="Fujimori K."/>
            <person name="Tanai H."/>
            <person name="Kimata M."/>
            <person name="Watanabe M."/>
            <person name="Hiraoka S."/>
            <person name="Chiba Y."/>
            <person name="Ishida S."/>
            <person name="Ono Y."/>
            <person name="Takiguchi S."/>
            <person name="Watanabe S."/>
            <person name="Yosida M."/>
            <person name="Hotuta T."/>
            <person name="Kusano J."/>
            <person name="Kanehori K."/>
            <person name="Takahashi-Fujii A."/>
            <person name="Hara H."/>
            <person name="Tanase T.-O."/>
            <person name="Nomura Y."/>
            <person name="Togiya S."/>
            <person name="Komai F."/>
            <person name="Hara R."/>
            <person name="Takeuchi K."/>
            <person name="Arita M."/>
            <person name="Imose N."/>
            <person name="Musashino K."/>
            <person name="Yuuki H."/>
            <person name="Oshima A."/>
            <person name="Sasaki N."/>
            <person name="Aotsuka S."/>
            <person name="Yoshikawa Y."/>
            <person name="Matsunawa H."/>
            <person name="Ichihara T."/>
            <person name="Shiohata N."/>
            <person name="Sano S."/>
            <person name="Moriya S."/>
            <person name="Momiyama H."/>
            <person name="Satoh N."/>
            <person name="Takami S."/>
            <person name="Terashima Y."/>
            <person name="Suzuki O."/>
            <person name="Nakagawa S."/>
            <person name="Senoh A."/>
            <person name="Mizoguchi H."/>
            <person name="Goto Y."/>
            <person name="Shimizu F."/>
            <person name="Wakebe H."/>
            <person name="Hishigaki H."/>
            <person name="Watanabe T."/>
            <person name="Sugiyama A."/>
            <person name="Takemoto M."/>
            <person name="Kawakami B."/>
            <person name="Yamazaki M."/>
            <person name="Watanabe K."/>
            <person name="Kumagai A."/>
            <person name="Itakura S."/>
            <person name="Fukuzumi Y."/>
            <person name="Fujimori Y."/>
            <person name="Komiyama M."/>
            <person name="Tashiro H."/>
            <person name="Tanigami A."/>
            <person name="Fujiwara T."/>
            <person name="Ono T."/>
            <person name="Yamada K."/>
            <person name="Fujii Y."/>
            <person name="Ozaki K."/>
            <person name="Hirao M."/>
            <person name="Ohmori Y."/>
            <person name="Kawabata A."/>
            <person name="Hikiji T."/>
            <person name="Kobatake N."/>
            <person name="Inagaki H."/>
            <person name="Ikema Y."/>
            <person name="Okamoto S."/>
            <person name="Okitani R."/>
            <person name="Kawakami T."/>
            <person name="Noguchi S."/>
            <person name="Itoh T."/>
            <person name="Shigeta K."/>
            <person name="Senba T."/>
            <person name="Matsumura K."/>
            <person name="Nakajima Y."/>
            <person name="Mizuno T."/>
            <person name="Morinaga M."/>
            <person name="Sasaki M."/>
            <person name="Togashi T."/>
            <person name="Oyama M."/>
            <person name="Hata H."/>
            <person name="Watanabe M."/>
            <person name="Komatsu T."/>
            <person name="Mizushima-Sugano J."/>
            <person name="Satoh T."/>
            <person name="Shirai Y."/>
            <person name="Takahashi Y."/>
            <person name="Nakagawa K."/>
            <person name="Okumura K."/>
            <person name="Nagase T."/>
            <person name="Nomura N."/>
            <person name="Kikuchi H."/>
            <person name="Masuho Y."/>
            <person name="Yamashita R."/>
            <person name="Nakai K."/>
            <person name="Yada T."/>
            <person name="Nakamura Y."/>
            <person name="Ohara O."/>
            <person name="Isogai T."/>
            <person name="Sugano S."/>
        </authorList>
    </citation>
    <scope>NUCLEOTIDE SEQUENCE [LARGE SCALE MRNA]</scope>
    <source>
        <tissue>Brain cortex</tissue>
    </source>
</reference>
<reference key="3">
    <citation type="submission" date="2005-03" db="EMBL/GenBank/DDBJ databases">
        <authorList>
            <person name="Totoki Y."/>
            <person name="Toyoda A."/>
            <person name="Takeda T."/>
            <person name="Sakaki Y."/>
            <person name="Tanaka A."/>
            <person name="Yokoyama S."/>
            <person name="Ohara O."/>
            <person name="Nagase T."/>
            <person name="Kikuno R.F."/>
        </authorList>
    </citation>
    <scope>NUCLEOTIDE SEQUENCE [LARGE SCALE MRNA]</scope>
    <scope>VARIANT ALA-80</scope>
    <source>
        <tissue>Brain</tissue>
    </source>
</reference>
<reference key="4">
    <citation type="journal article" date="2005" name="Nature">
        <title>Generation and annotation of the DNA sequences of human chromosomes 2 and 4.</title>
        <authorList>
            <person name="Hillier L.W."/>
            <person name="Graves T.A."/>
            <person name="Fulton R.S."/>
            <person name="Fulton L.A."/>
            <person name="Pepin K.H."/>
            <person name="Minx P."/>
            <person name="Wagner-McPherson C."/>
            <person name="Layman D."/>
            <person name="Wylie K."/>
            <person name="Sekhon M."/>
            <person name="Becker M.C."/>
            <person name="Fewell G.A."/>
            <person name="Delehaunty K.D."/>
            <person name="Miner T.L."/>
            <person name="Nash W.E."/>
            <person name="Kremitzki C."/>
            <person name="Oddy L."/>
            <person name="Du H."/>
            <person name="Sun H."/>
            <person name="Bradshaw-Cordum H."/>
            <person name="Ali J."/>
            <person name="Carter J."/>
            <person name="Cordes M."/>
            <person name="Harris A."/>
            <person name="Isak A."/>
            <person name="van Brunt A."/>
            <person name="Nguyen C."/>
            <person name="Du F."/>
            <person name="Courtney L."/>
            <person name="Kalicki J."/>
            <person name="Ozersky P."/>
            <person name="Abbott S."/>
            <person name="Armstrong J."/>
            <person name="Belter E.A."/>
            <person name="Caruso L."/>
            <person name="Cedroni M."/>
            <person name="Cotton M."/>
            <person name="Davidson T."/>
            <person name="Desai A."/>
            <person name="Elliott G."/>
            <person name="Erb T."/>
            <person name="Fronick C."/>
            <person name="Gaige T."/>
            <person name="Haakenson W."/>
            <person name="Haglund K."/>
            <person name="Holmes A."/>
            <person name="Harkins R."/>
            <person name="Kim K."/>
            <person name="Kruchowski S.S."/>
            <person name="Strong C.M."/>
            <person name="Grewal N."/>
            <person name="Goyea E."/>
            <person name="Hou S."/>
            <person name="Levy A."/>
            <person name="Martinka S."/>
            <person name="Mead K."/>
            <person name="McLellan M.D."/>
            <person name="Meyer R."/>
            <person name="Randall-Maher J."/>
            <person name="Tomlinson C."/>
            <person name="Dauphin-Kohlberg S."/>
            <person name="Kozlowicz-Reilly A."/>
            <person name="Shah N."/>
            <person name="Swearengen-Shahid S."/>
            <person name="Snider J."/>
            <person name="Strong J.T."/>
            <person name="Thompson J."/>
            <person name="Yoakum M."/>
            <person name="Leonard S."/>
            <person name="Pearman C."/>
            <person name="Trani L."/>
            <person name="Radionenko M."/>
            <person name="Waligorski J.E."/>
            <person name="Wang C."/>
            <person name="Rock S.M."/>
            <person name="Tin-Wollam A.-M."/>
            <person name="Maupin R."/>
            <person name="Latreille P."/>
            <person name="Wendl M.C."/>
            <person name="Yang S.-P."/>
            <person name="Pohl C."/>
            <person name="Wallis J.W."/>
            <person name="Spieth J."/>
            <person name="Bieri T.A."/>
            <person name="Berkowicz N."/>
            <person name="Nelson J.O."/>
            <person name="Osborne J."/>
            <person name="Ding L."/>
            <person name="Meyer R."/>
            <person name="Sabo A."/>
            <person name="Shotland Y."/>
            <person name="Sinha P."/>
            <person name="Wohldmann P.E."/>
            <person name="Cook L.L."/>
            <person name="Hickenbotham M.T."/>
            <person name="Eldred J."/>
            <person name="Williams D."/>
            <person name="Jones T.A."/>
            <person name="She X."/>
            <person name="Ciccarelli F.D."/>
            <person name="Izaurralde E."/>
            <person name="Taylor J."/>
            <person name="Schmutz J."/>
            <person name="Myers R.M."/>
            <person name="Cox D.R."/>
            <person name="Huang X."/>
            <person name="McPherson J.D."/>
            <person name="Mardis E.R."/>
            <person name="Clifton S.W."/>
            <person name="Warren W.C."/>
            <person name="Chinwalla A.T."/>
            <person name="Eddy S.R."/>
            <person name="Marra M.A."/>
            <person name="Ovcharenko I."/>
            <person name="Furey T.S."/>
            <person name="Miller W."/>
            <person name="Eichler E.E."/>
            <person name="Bork P."/>
            <person name="Suyama M."/>
            <person name="Torrents D."/>
            <person name="Waterston R.H."/>
            <person name="Wilson R.K."/>
        </authorList>
    </citation>
    <scope>NUCLEOTIDE SEQUENCE [LARGE SCALE GENOMIC DNA]</scope>
</reference>
<reference key="5">
    <citation type="submission" date="2005-09" db="EMBL/GenBank/DDBJ databases">
        <authorList>
            <person name="Mural R.J."/>
            <person name="Istrail S."/>
            <person name="Sutton G.G."/>
            <person name="Florea L."/>
            <person name="Halpern A.L."/>
            <person name="Mobarry C.M."/>
            <person name="Lippert R."/>
            <person name="Walenz B."/>
            <person name="Shatkay H."/>
            <person name="Dew I."/>
            <person name="Miller J.R."/>
            <person name="Flanigan M.J."/>
            <person name="Edwards N.J."/>
            <person name="Bolanos R."/>
            <person name="Fasulo D."/>
            <person name="Halldorsson B.V."/>
            <person name="Hannenhalli S."/>
            <person name="Turner R."/>
            <person name="Yooseph S."/>
            <person name="Lu F."/>
            <person name="Nusskern D.R."/>
            <person name="Shue B.C."/>
            <person name="Zheng X.H."/>
            <person name="Zhong F."/>
            <person name="Delcher A.L."/>
            <person name="Huson D.H."/>
            <person name="Kravitz S.A."/>
            <person name="Mouchard L."/>
            <person name="Reinert K."/>
            <person name="Remington K.A."/>
            <person name="Clark A.G."/>
            <person name="Waterman M.S."/>
            <person name="Eichler E.E."/>
            <person name="Adams M.D."/>
            <person name="Hunkapiller M.W."/>
            <person name="Myers E.W."/>
            <person name="Venter J.C."/>
        </authorList>
    </citation>
    <scope>NUCLEOTIDE SEQUENCE [LARGE SCALE GENOMIC DNA]</scope>
</reference>
<reference key="6">
    <citation type="journal article" date="2004" name="Genome Res.">
        <title>The status, quality, and expansion of the NIH full-length cDNA project: the Mammalian Gene Collection (MGC).</title>
        <authorList>
            <consortium name="The MGC Project Team"/>
        </authorList>
    </citation>
    <scope>NUCLEOTIDE SEQUENCE [LARGE SCALE MRNA]</scope>
    <source>
        <tissue>Urinary bladder</tissue>
    </source>
</reference>
<reference key="7">
    <citation type="journal article" date="1992" name="Biochem. J.">
        <title>Isolation and characterization of grancalcin, a novel 28 kDa EF-hand calcium-binding protein from human neutrophils.</title>
        <authorList>
            <person name="Teahan C.G."/>
            <person name="Totty N.F."/>
            <person name="Segal A.W."/>
        </authorList>
    </citation>
    <scope>PROTEIN SEQUENCE OF 15-27; 109-125 AND 146-175</scope>
    <scope>SUBUNIT</scope>
    <scope>CALCIUM-BINDING</scope>
    <scope>SUBCELLULAR LOCATION</scope>
    <source>
        <tissue>Neutrophil</tissue>
    </source>
</reference>
<reference key="8">
    <citation type="journal article" date="2001" name="J. Biol. Chem.">
        <title>Biochemical characterization of the penta-EF-hand protein grancalcin and identification of L-plastin as a binding partner.</title>
        <authorList>
            <person name="Lollike K."/>
            <person name="Johnsen A.H."/>
            <person name="Durussel I."/>
            <person name="Borregaard N."/>
            <person name="Cox J.A."/>
        </authorList>
    </citation>
    <scope>INTERACTION WITH LCP1</scope>
</reference>
<reference key="9">
    <citation type="journal article" date="2003" name="FEBS Lett.">
        <title>The PEF family proteins sorcin and grancalcin interact in vivo and in vitro.</title>
        <authorList>
            <person name="Hansen C."/>
            <person name="Tarabykina S."/>
            <person name="la Cour J.M."/>
            <person name="Lollike K."/>
            <person name="Berchtold M.W."/>
        </authorList>
    </citation>
    <scope>INTERACTION WITH SRI</scope>
</reference>
<reference key="10">
    <citation type="journal article" date="2011" name="BMC Syst. Biol.">
        <title>Initial characterization of the human central proteome.</title>
        <authorList>
            <person name="Burkard T.R."/>
            <person name="Planyavsky M."/>
            <person name="Kaupe I."/>
            <person name="Breitwieser F.P."/>
            <person name="Buerckstuemmer T."/>
            <person name="Bennett K.L."/>
            <person name="Superti-Furga G."/>
            <person name="Colinge J."/>
        </authorList>
    </citation>
    <scope>IDENTIFICATION BY MASS SPECTROMETRY [LARGE SCALE ANALYSIS]</scope>
</reference>
<reference key="11">
    <citation type="journal article" date="2000" name="J. Mol. Biol.">
        <title>Crystal structure of human grancalcin, a member of the penta-EF-hand protein family.</title>
        <authorList>
            <person name="Jia J."/>
            <person name="Han Q."/>
            <person name="Borregaard N."/>
            <person name="Lollike K."/>
            <person name="Cygler M."/>
        </authorList>
    </citation>
    <scope>X-RAY CRYSTALLOGRAPHY (1.9 ANGSTROMS) OF 53-217</scope>
</reference>
<reference key="12">
    <citation type="journal article" date="2001" name="Acta Crystallogr. D">
        <title>Structure of Ca(2+)-loaded human grancalcin.</title>
        <authorList>
            <person name="Jia J."/>
            <person name="Borregaard N."/>
            <person name="Lollike K."/>
            <person name="Cygler M."/>
        </authorList>
    </citation>
    <scope>X-RAY CRYSTALLOGRAPHY (1.7 ANGSTROMS) OF 53-217 IN COMPLEX WITH CALCIUM</scope>
    <scope>SUBUNIT</scope>
</reference>
<organism>
    <name type="scientific">Homo sapiens</name>
    <name type="common">Human</name>
    <dbReference type="NCBI Taxonomy" id="9606"/>
    <lineage>
        <taxon>Eukaryota</taxon>
        <taxon>Metazoa</taxon>
        <taxon>Chordata</taxon>
        <taxon>Craniata</taxon>
        <taxon>Vertebrata</taxon>
        <taxon>Euteleostomi</taxon>
        <taxon>Mammalia</taxon>
        <taxon>Eutheria</taxon>
        <taxon>Euarchontoglires</taxon>
        <taxon>Primates</taxon>
        <taxon>Haplorrhini</taxon>
        <taxon>Catarrhini</taxon>
        <taxon>Hominidae</taxon>
        <taxon>Homo</taxon>
    </lineage>
</organism>
<protein>
    <recommendedName>
        <fullName>Grancalcin</fullName>
    </recommendedName>
</protein>
<sequence length="217" mass="24010">MAYPGYGGGFGNFSIQVPGMQMGQPVPETGPAILLDGYSGPAYSDTYSSAGDSVYTYFSAVAGQDGEVDAEELQRCLTQSGINGTYSPFSLETCRIMIAMLDRDHTGKMGFNAFKELWAALNAWKENFMTVDQDGSGTVEHHELRQAIGLMGYRLSPQTLTTIVKRYSKNGRIFFDDYVACCVKLRALTDFFRKRDHLQQGSANFIYDDFLQGTMAI</sequence>
<gene>
    <name type="primary">GCA</name>
    <name type="synonym">GCL</name>
</gene>
<keyword id="KW-0002">3D-structure</keyword>
<keyword id="KW-0106">Calcium</keyword>
<keyword id="KW-0963">Cytoplasm</keyword>
<keyword id="KW-0903">Direct protein sequencing</keyword>
<keyword id="KW-0472">Membrane</keyword>
<keyword id="KW-0479">Metal-binding</keyword>
<keyword id="KW-1267">Proteomics identification</keyword>
<keyword id="KW-1185">Reference proteome</keyword>
<keyword id="KW-0677">Repeat</keyword>
<proteinExistence type="evidence at protein level"/>
<dbReference type="EMBL" id="M81637">
    <property type="protein sequence ID" value="AAA58498.1"/>
    <property type="molecule type" value="mRNA"/>
</dbReference>
<dbReference type="EMBL" id="AK312349">
    <property type="protein sequence ID" value="BAG35270.1"/>
    <property type="molecule type" value="mRNA"/>
</dbReference>
<dbReference type="EMBL" id="AB209768">
    <property type="protein sequence ID" value="BAD93005.1"/>
    <property type="status" value="ALT_INIT"/>
    <property type="molecule type" value="mRNA"/>
</dbReference>
<dbReference type="EMBL" id="AC010876">
    <property type="protein sequence ID" value="AAX93138.1"/>
    <property type="molecule type" value="Genomic_DNA"/>
</dbReference>
<dbReference type="EMBL" id="CH471058">
    <property type="protein sequence ID" value="EAX11350.1"/>
    <property type="molecule type" value="Genomic_DNA"/>
</dbReference>
<dbReference type="EMBL" id="BC005214">
    <property type="protein sequence ID" value="AAH05214.1"/>
    <property type="molecule type" value="mRNA"/>
</dbReference>
<dbReference type="CCDS" id="CCDS2218.1"/>
<dbReference type="PIR" id="A42578">
    <property type="entry name" value="A42578"/>
</dbReference>
<dbReference type="RefSeq" id="NP_036330.1">
    <property type="nucleotide sequence ID" value="NM_012198.5"/>
</dbReference>
<dbReference type="PDB" id="1F4O">
    <property type="method" value="X-ray"/>
    <property type="resolution" value="2.50 A"/>
    <property type="chains" value="A/B=53-217"/>
</dbReference>
<dbReference type="PDB" id="1F4Q">
    <property type="method" value="X-ray"/>
    <property type="resolution" value="1.90 A"/>
    <property type="chains" value="A/B=53-217"/>
</dbReference>
<dbReference type="PDB" id="1K94">
    <property type="method" value="X-ray"/>
    <property type="resolution" value="1.70 A"/>
    <property type="chains" value="A/B=53-217"/>
</dbReference>
<dbReference type="PDB" id="1K95">
    <property type="method" value="X-ray"/>
    <property type="resolution" value="1.90 A"/>
    <property type="chains" value="A=53-217"/>
</dbReference>
<dbReference type="PDBsum" id="1F4O"/>
<dbReference type="PDBsum" id="1F4Q"/>
<dbReference type="PDBsum" id="1K94"/>
<dbReference type="PDBsum" id="1K95"/>
<dbReference type="SMR" id="P28676"/>
<dbReference type="BioGRID" id="117333">
    <property type="interactions" value="51"/>
</dbReference>
<dbReference type="CORUM" id="P28676"/>
<dbReference type="DIP" id="DIP-41437N"/>
<dbReference type="FunCoup" id="P28676">
    <property type="interactions" value="521"/>
</dbReference>
<dbReference type="IntAct" id="P28676">
    <property type="interactions" value="42"/>
</dbReference>
<dbReference type="STRING" id="9606.ENSP00000394842"/>
<dbReference type="DrugBank" id="DB11093">
    <property type="generic name" value="Calcium citrate"/>
</dbReference>
<dbReference type="DrugBank" id="DB11348">
    <property type="generic name" value="Calcium Phosphate"/>
</dbReference>
<dbReference type="DrugBank" id="DB14481">
    <property type="generic name" value="Calcium phosphate dihydrate"/>
</dbReference>
<dbReference type="iPTMnet" id="P28676"/>
<dbReference type="PhosphoSitePlus" id="P28676"/>
<dbReference type="BioMuta" id="GCA"/>
<dbReference type="DMDM" id="1170014"/>
<dbReference type="jPOST" id="P28676"/>
<dbReference type="MassIVE" id="P28676"/>
<dbReference type="PaxDb" id="9606-ENSP00000394842"/>
<dbReference type="PeptideAtlas" id="P28676"/>
<dbReference type="ProteomicsDB" id="54491"/>
<dbReference type="Pumba" id="P28676"/>
<dbReference type="Antibodypedia" id="33752">
    <property type="antibodies" value="138 antibodies from 26 providers"/>
</dbReference>
<dbReference type="DNASU" id="25801"/>
<dbReference type="Ensembl" id="ENST00000437150.7">
    <property type="protein sequence ID" value="ENSP00000394842.2"/>
    <property type="gene ID" value="ENSG00000115271.11"/>
</dbReference>
<dbReference type="GeneID" id="25801"/>
<dbReference type="KEGG" id="hsa:25801"/>
<dbReference type="MANE-Select" id="ENST00000437150.7">
    <property type="protein sequence ID" value="ENSP00000394842.2"/>
    <property type="RefSeq nucleotide sequence ID" value="NM_012198.5"/>
    <property type="RefSeq protein sequence ID" value="NP_036330.1"/>
</dbReference>
<dbReference type="UCSC" id="uc002ucg.4">
    <property type="organism name" value="human"/>
</dbReference>
<dbReference type="AGR" id="HGNC:15990"/>
<dbReference type="CTD" id="25801"/>
<dbReference type="DisGeNET" id="25801"/>
<dbReference type="GeneCards" id="GCA"/>
<dbReference type="HGNC" id="HGNC:15990">
    <property type="gene designation" value="GCA"/>
</dbReference>
<dbReference type="HPA" id="ENSG00000115271">
    <property type="expression patterns" value="Tissue enriched (bone)"/>
</dbReference>
<dbReference type="MIM" id="607030">
    <property type="type" value="gene"/>
</dbReference>
<dbReference type="neXtProt" id="NX_P28676"/>
<dbReference type="OpenTargets" id="ENSG00000115271"/>
<dbReference type="PharmGKB" id="PA28602"/>
<dbReference type="VEuPathDB" id="HostDB:ENSG00000115271"/>
<dbReference type="eggNOG" id="KOG0037">
    <property type="taxonomic scope" value="Eukaryota"/>
</dbReference>
<dbReference type="GeneTree" id="ENSGT00940000153979"/>
<dbReference type="InParanoid" id="P28676"/>
<dbReference type="OMA" id="NGAYSPF"/>
<dbReference type="OrthoDB" id="186625at2759"/>
<dbReference type="PAN-GO" id="P28676">
    <property type="GO annotations" value="1 GO annotation based on evolutionary models"/>
</dbReference>
<dbReference type="PhylomeDB" id="P28676"/>
<dbReference type="TreeFam" id="TF314682"/>
<dbReference type="PathwayCommons" id="P28676"/>
<dbReference type="Reactome" id="R-HSA-6798695">
    <property type="pathway name" value="Neutrophil degranulation"/>
</dbReference>
<dbReference type="SignaLink" id="P28676"/>
<dbReference type="BioGRID-ORCS" id="25801">
    <property type="hits" value="9 hits in 1152 CRISPR screens"/>
</dbReference>
<dbReference type="CD-CODE" id="DEE660B4">
    <property type="entry name" value="Stress granule"/>
</dbReference>
<dbReference type="ChiTaRS" id="GCA">
    <property type="organism name" value="human"/>
</dbReference>
<dbReference type="EvolutionaryTrace" id="P28676"/>
<dbReference type="GeneWiki" id="GCA_(gene)"/>
<dbReference type="GenomeRNAi" id="25801"/>
<dbReference type="Pharos" id="P28676">
    <property type="development level" value="Tbio"/>
</dbReference>
<dbReference type="PRO" id="PR:P28676"/>
<dbReference type="Proteomes" id="UP000005640">
    <property type="component" value="Chromosome 2"/>
</dbReference>
<dbReference type="RNAct" id="P28676">
    <property type="molecule type" value="protein"/>
</dbReference>
<dbReference type="Bgee" id="ENSG00000115271">
    <property type="expression patterns" value="Expressed in monocyte and 192 other cell types or tissues"/>
</dbReference>
<dbReference type="ExpressionAtlas" id="P28676">
    <property type="expression patterns" value="baseline and differential"/>
</dbReference>
<dbReference type="GO" id="GO:0035578">
    <property type="term" value="C:azurophil granule lumen"/>
    <property type="evidence" value="ECO:0000304"/>
    <property type="project" value="Reactome"/>
</dbReference>
<dbReference type="GO" id="GO:0005737">
    <property type="term" value="C:cytoplasm"/>
    <property type="evidence" value="ECO:0000304"/>
    <property type="project" value="ProtInc"/>
</dbReference>
<dbReference type="GO" id="GO:0005829">
    <property type="term" value="C:cytosol"/>
    <property type="evidence" value="ECO:0000314"/>
    <property type="project" value="HPA"/>
</dbReference>
<dbReference type="GO" id="GO:0070062">
    <property type="term" value="C:extracellular exosome"/>
    <property type="evidence" value="ECO:0007005"/>
    <property type="project" value="UniProtKB"/>
</dbReference>
<dbReference type="GO" id="GO:0005576">
    <property type="term" value="C:extracellular region"/>
    <property type="evidence" value="ECO:0000304"/>
    <property type="project" value="Reactome"/>
</dbReference>
<dbReference type="GO" id="GO:0005886">
    <property type="term" value="C:plasma membrane"/>
    <property type="evidence" value="ECO:0000314"/>
    <property type="project" value="HPA"/>
</dbReference>
<dbReference type="GO" id="GO:0005509">
    <property type="term" value="F:calcium ion binding"/>
    <property type="evidence" value="ECO:0000314"/>
    <property type="project" value="UniProtKB"/>
</dbReference>
<dbReference type="GO" id="GO:0046982">
    <property type="term" value="F:protein heterodimerization activity"/>
    <property type="evidence" value="ECO:0000353"/>
    <property type="project" value="BHF-UCL"/>
</dbReference>
<dbReference type="GO" id="GO:0042803">
    <property type="term" value="F:protein homodimerization activity"/>
    <property type="evidence" value="ECO:0000353"/>
    <property type="project" value="UniProtKB"/>
</dbReference>
<dbReference type="GO" id="GO:0061025">
    <property type="term" value="P:membrane fusion"/>
    <property type="evidence" value="ECO:0000304"/>
    <property type="project" value="ProtInc"/>
</dbReference>
<dbReference type="CDD" id="cd16186">
    <property type="entry name" value="EFh_PEF_grancalcin"/>
    <property type="match status" value="1"/>
</dbReference>
<dbReference type="FunFam" id="1.10.238.10:FF:000087">
    <property type="entry name" value="Sorcin"/>
    <property type="match status" value="1"/>
</dbReference>
<dbReference type="Gene3D" id="6.10.140.900">
    <property type="match status" value="1"/>
</dbReference>
<dbReference type="Gene3D" id="1.10.238.10">
    <property type="entry name" value="EF-hand"/>
    <property type="match status" value="1"/>
</dbReference>
<dbReference type="InterPro" id="IPR011992">
    <property type="entry name" value="EF-hand-dom_pair"/>
</dbReference>
<dbReference type="InterPro" id="IPR018247">
    <property type="entry name" value="EF_Hand_1_Ca_BS"/>
</dbReference>
<dbReference type="InterPro" id="IPR002048">
    <property type="entry name" value="EF_hand_dom"/>
</dbReference>
<dbReference type="PANTHER" id="PTHR46735">
    <property type="entry name" value="CALPAIN, SMALL SUBUNIT 1 A-RELATED"/>
    <property type="match status" value="1"/>
</dbReference>
<dbReference type="PANTHER" id="PTHR46735:SF5">
    <property type="entry name" value="GRANCALCIN"/>
    <property type="match status" value="1"/>
</dbReference>
<dbReference type="Pfam" id="PF13202">
    <property type="entry name" value="EF-hand_5"/>
    <property type="match status" value="1"/>
</dbReference>
<dbReference type="Pfam" id="PF13833">
    <property type="entry name" value="EF-hand_8"/>
    <property type="match status" value="1"/>
</dbReference>
<dbReference type="SMART" id="SM00054">
    <property type="entry name" value="EFh"/>
    <property type="match status" value="2"/>
</dbReference>
<dbReference type="SUPFAM" id="SSF47473">
    <property type="entry name" value="EF-hand"/>
    <property type="match status" value="1"/>
</dbReference>
<dbReference type="PROSITE" id="PS00018">
    <property type="entry name" value="EF_HAND_1"/>
    <property type="match status" value="1"/>
</dbReference>
<dbReference type="PROSITE" id="PS50222">
    <property type="entry name" value="EF_HAND_2"/>
    <property type="match status" value="3"/>
</dbReference>
<evidence type="ECO:0000255" key="1">
    <source>
        <dbReference type="PROSITE-ProRule" id="PRU00448"/>
    </source>
</evidence>
<evidence type="ECO:0000269" key="2">
    <source>
    </source>
</evidence>
<evidence type="ECO:0000269" key="3">
    <source>
    </source>
</evidence>
<evidence type="ECO:0000269" key="4">
    <source>
    </source>
</evidence>
<evidence type="ECO:0000269" key="5">
    <source>
    </source>
</evidence>
<evidence type="ECO:0000269" key="6">
    <source>
    </source>
</evidence>
<evidence type="ECO:0000269" key="7">
    <source ref="3"/>
</evidence>
<evidence type="ECO:0000305" key="8"/>
<evidence type="ECO:0000305" key="9">
    <source>
    </source>
</evidence>
<evidence type="ECO:0007829" key="10">
    <source>
        <dbReference type="PDB" id="1F4O"/>
    </source>
</evidence>
<evidence type="ECO:0007829" key="11">
    <source>
        <dbReference type="PDB" id="1F4Q"/>
    </source>
</evidence>
<evidence type="ECO:0007829" key="12">
    <source>
        <dbReference type="PDB" id="1K94"/>
    </source>
</evidence>